<proteinExistence type="inferred from homology"/>
<sequence length="461" mass="50378">MAEKKPELQRGLEARHIELIALGGTIGVGLFMGAASTLKWAGPSVLLAYIIAGLFVFFIMRSMGEMLFLEPVTGSFAVYAHRYMSPFFGYLTAWSYWFMWMAVGISEITAIGVYVQFWFPEMAQWIPALIAVGLVALANLAAVRLYGEIEFWFAMIKVTTIIVMIIIGLGVIFFGFGNGGQAIGFGNLTEHGGFFAGGWKGFLTALCIVVASYQGVELIGITAGEAKNPQVTLRSAVGKVLWRILIFYVGAIFVIVTIFPWNEIGSNGSPFVLTFAKIGITAAAGIINFVVLTAALSGCNSGMYSCGRMLYALAKNRQLPAAVAKVSRHGVPVAGVALSILILLVGSCLNYIIPNPQRVFVYVYSASVLPGMVPWFVILISQLRFRRAHKEAIADHPFRSIMFPWANYLTMAFLVCVLIGMYFNEDTRMSLFVGVIFLLAVTLVYKVFGLNRHGTAHKVGE</sequence>
<dbReference type="EMBL" id="AL513382">
    <property type="protein sequence ID" value="CAD09386.1"/>
    <property type="molecule type" value="Genomic_DNA"/>
</dbReference>
<dbReference type="EMBL" id="AE014613">
    <property type="protein sequence ID" value="AAO70891.1"/>
    <property type="molecule type" value="Genomic_DNA"/>
</dbReference>
<dbReference type="RefSeq" id="NP_457817.1">
    <property type="nucleotide sequence ID" value="NC_003198.1"/>
</dbReference>
<dbReference type="RefSeq" id="WP_000818378.1">
    <property type="nucleotide sequence ID" value="NZ_WSUR01000032.1"/>
</dbReference>
<dbReference type="SMR" id="P0A190"/>
<dbReference type="STRING" id="220341.gene:17587481"/>
<dbReference type="KEGG" id="stt:t3367"/>
<dbReference type="KEGG" id="sty:STY3625"/>
<dbReference type="PATRIC" id="fig|220341.7.peg.3694"/>
<dbReference type="eggNOG" id="COG1113">
    <property type="taxonomic scope" value="Bacteria"/>
</dbReference>
<dbReference type="HOGENOM" id="CLU_007946_9_3_6"/>
<dbReference type="OMA" id="FWSVMVN"/>
<dbReference type="OrthoDB" id="5297508at2"/>
<dbReference type="Proteomes" id="UP000000541">
    <property type="component" value="Chromosome"/>
</dbReference>
<dbReference type="Proteomes" id="UP000002670">
    <property type="component" value="Chromosome"/>
</dbReference>
<dbReference type="GO" id="GO:0005886">
    <property type="term" value="C:plasma membrane"/>
    <property type="evidence" value="ECO:0007669"/>
    <property type="project" value="UniProtKB-SubCell"/>
</dbReference>
<dbReference type="GO" id="GO:0006865">
    <property type="term" value="P:amino acid transport"/>
    <property type="evidence" value="ECO:0007669"/>
    <property type="project" value="UniProtKB-KW"/>
</dbReference>
<dbReference type="GO" id="GO:0055085">
    <property type="term" value="P:transmembrane transport"/>
    <property type="evidence" value="ECO:0007669"/>
    <property type="project" value="InterPro"/>
</dbReference>
<dbReference type="FunFam" id="1.20.1740.10:FF:000001">
    <property type="entry name" value="Amino acid permease"/>
    <property type="match status" value="1"/>
</dbReference>
<dbReference type="Gene3D" id="1.20.1740.10">
    <property type="entry name" value="Amino acid/polyamine transporter I"/>
    <property type="match status" value="1"/>
</dbReference>
<dbReference type="InterPro" id="IPR004841">
    <property type="entry name" value="AA-permease/SLC12A_dom"/>
</dbReference>
<dbReference type="InterPro" id="IPR004840">
    <property type="entry name" value="Amino_acid_permease_CS"/>
</dbReference>
<dbReference type="NCBIfam" id="NF047867">
    <property type="entry name" value="AA_transp_ThrP"/>
    <property type="match status" value="1"/>
</dbReference>
<dbReference type="NCBIfam" id="NF008016">
    <property type="entry name" value="PRK10746.1"/>
    <property type="match status" value="1"/>
</dbReference>
<dbReference type="PANTHER" id="PTHR43495">
    <property type="entry name" value="GABA PERMEASE"/>
    <property type="match status" value="1"/>
</dbReference>
<dbReference type="PANTHER" id="PTHR43495:SF7">
    <property type="entry name" value="TRANSPORT PROTEIN YIFK-RELATED"/>
    <property type="match status" value="1"/>
</dbReference>
<dbReference type="Pfam" id="PF00324">
    <property type="entry name" value="AA_permease"/>
    <property type="match status" value="1"/>
</dbReference>
<dbReference type="PIRSF" id="PIRSF006060">
    <property type="entry name" value="AA_transporter"/>
    <property type="match status" value="1"/>
</dbReference>
<dbReference type="PROSITE" id="PS00218">
    <property type="entry name" value="AMINO_ACID_PERMEASE_1"/>
    <property type="match status" value="1"/>
</dbReference>
<feature type="chain" id="PRO_0000054219" description="Threonine/serine transporter ThrP">
    <location>
        <begin position="1"/>
        <end position="461"/>
    </location>
</feature>
<feature type="transmembrane region" description="Helical" evidence="2">
    <location>
        <begin position="17"/>
        <end position="37"/>
    </location>
</feature>
<feature type="transmembrane region" description="Helical" evidence="2">
    <location>
        <begin position="40"/>
        <end position="60"/>
    </location>
</feature>
<feature type="transmembrane region" description="Helical" evidence="2">
    <location>
        <begin position="97"/>
        <end position="117"/>
    </location>
</feature>
<feature type="transmembrane region" description="Helical" evidence="2">
    <location>
        <begin position="123"/>
        <end position="143"/>
    </location>
</feature>
<feature type="transmembrane region" description="Helical" evidence="2">
    <location>
        <begin position="156"/>
        <end position="176"/>
    </location>
</feature>
<feature type="transmembrane region" description="Helical" evidence="2">
    <location>
        <begin position="201"/>
        <end position="221"/>
    </location>
</feature>
<feature type="transmembrane region" description="Helical" evidence="2">
    <location>
        <begin position="244"/>
        <end position="264"/>
    </location>
</feature>
<feature type="transmembrane region" description="Helical" evidence="2">
    <location>
        <begin position="278"/>
        <end position="298"/>
    </location>
</feature>
<feature type="transmembrane region" description="Helical" evidence="2">
    <location>
        <begin position="333"/>
        <end position="353"/>
    </location>
</feature>
<feature type="transmembrane region" description="Helical" evidence="2">
    <location>
        <begin position="360"/>
        <end position="380"/>
    </location>
</feature>
<feature type="transmembrane region" description="Helical" evidence="2">
    <location>
        <begin position="401"/>
        <end position="421"/>
    </location>
</feature>
<feature type="transmembrane region" description="Helical" evidence="2">
    <location>
        <begin position="430"/>
        <end position="450"/>
    </location>
</feature>
<reference key="1">
    <citation type="journal article" date="2001" name="Nature">
        <title>Complete genome sequence of a multiple drug resistant Salmonella enterica serovar Typhi CT18.</title>
        <authorList>
            <person name="Parkhill J."/>
            <person name="Dougan G."/>
            <person name="James K.D."/>
            <person name="Thomson N.R."/>
            <person name="Pickard D."/>
            <person name="Wain J."/>
            <person name="Churcher C.M."/>
            <person name="Mungall K.L."/>
            <person name="Bentley S.D."/>
            <person name="Holden M.T.G."/>
            <person name="Sebaihia M."/>
            <person name="Baker S."/>
            <person name="Basham D."/>
            <person name="Brooks K."/>
            <person name="Chillingworth T."/>
            <person name="Connerton P."/>
            <person name="Cronin A."/>
            <person name="Davis P."/>
            <person name="Davies R.M."/>
            <person name="Dowd L."/>
            <person name="White N."/>
            <person name="Farrar J."/>
            <person name="Feltwell T."/>
            <person name="Hamlin N."/>
            <person name="Haque A."/>
            <person name="Hien T.T."/>
            <person name="Holroyd S."/>
            <person name="Jagels K."/>
            <person name="Krogh A."/>
            <person name="Larsen T.S."/>
            <person name="Leather S."/>
            <person name="Moule S."/>
            <person name="O'Gaora P."/>
            <person name="Parry C."/>
            <person name="Quail M.A."/>
            <person name="Rutherford K.M."/>
            <person name="Simmonds M."/>
            <person name="Skelton J."/>
            <person name="Stevens K."/>
            <person name="Whitehead S."/>
            <person name="Barrell B.G."/>
        </authorList>
    </citation>
    <scope>NUCLEOTIDE SEQUENCE [LARGE SCALE GENOMIC DNA]</scope>
    <source>
        <strain>CT18</strain>
    </source>
</reference>
<reference key="2">
    <citation type="journal article" date="2003" name="J. Bacteriol.">
        <title>Comparative genomics of Salmonella enterica serovar Typhi strains Ty2 and CT18.</title>
        <authorList>
            <person name="Deng W."/>
            <person name="Liou S.-R."/>
            <person name="Plunkett G. III"/>
            <person name="Mayhew G.F."/>
            <person name="Rose D.J."/>
            <person name="Burland V."/>
            <person name="Kodoyianni V."/>
            <person name="Schwartz D.C."/>
            <person name="Blattner F.R."/>
        </authorList>
    </citation>
    <scope>NUCLEOTIDE SEQUENCE [LARGE SCALE GENOMIC DNA]</scope>
    <source>
        <strain>ATCC 700931 / Ty2</strain>
    </source>
</reference>
<name>THRP_SALTI</name>
<organism>
    <name type="scientific">Salmonella typhi</name>
    <dbReference type="NCBI Taxonomy" id="90370"/>
    <lineage>
        <taxon>Bacteria</taxon>
        <taxon>Pseudomonadati</taxon>
        <taxon>Pseudomonadota</taxon>
        <taxon>Gammaproteobacteria</taxon>
        <taxon>Enterobacterales</taxon>
        <taxon>Enterobacteriaceae</taxon>
        <taxon>Salmonella</taxon>
    </lineage>
</organism>
<accession>P0A190</accession>
<accession>P37456</accession>
<accession>Q9L6Q6</accession>
<keyword id="KW-0029">Amino-acid transport</keyword>
<keyword id="KW-0997">Cell inner membrane</keyword>
<keyword id="KW-1003">Cell membrane</keyword>
<keyword id="KW-0472">Membrane</keyword>
<keyword id="KW-0812">Transmembrane</keyword>
<keyword id="KW-1133">Transmembrane helix</keyword>
<keyword id="KW-0813">Transport</keyword>
<protein>
    <recommendedName>
        <fullName evidence="1">Threonine/serine transporter ThrP</fullName>
    </recommendedName>
    <alternativeName>
        <fullName evidence="1">Threonine/serine:H(+) symporter ThrP</fullName>
    </alternativeName>
</protein>
<gene>
    <name evidence="1" type="primary">thrP</name>
    <name type="synonym">yifK</name>
    <name type="ordered locus">STY3625</name>
    <name type="ordered locus">t3367</name>
</gene>
<comment type="function">
    <text evidence="1">Permease that mediates the proton-dependent threonine and serine uptake.</text>
</comment>
<comment type="catalytic activity">
    <reaction evidence="1">
        <text>L-threonine(in) + H(+)(in) = L-threonine(out) + H(+)(out)</text>
        <dbReference type="Rhea" id="RHEA:28883"/>
        <dbReference type="ChEBI" id="CHEBI:15378"/>
        <dbReference type="ChEBI" id="CHEBI:57926"/>
    </reaction>
    <physiologicalReaction direction="right-to-left" evidence="1">
        <dbReference type="Rhea" id="RHEA:28885"/>
    </physiologicalReaction>
</comment>
<comment type="catalytic activity">
    <reaction evidence="1">
        <text>L-serine(in) + H(+)(in) = L-serine(out) + H(+)(out)</text>
        <dbReference type="Rhea" id="RHEA:28887"/>
        <dbReference type="ChEBI" id="CHEBI:15378"/>
        <dbReference type="ChEBI" id="CHEBI:33384"/>
    </reaction>
    <physiologicalReaction direction="right-to-left" evidence="1">
        <dbReference type="Rhea" id="RHEA:28889"/>
    </physiologicalReaction>
</comment>
<comment type="subcellular location">
    <subcellularLocation>
        <location evidence="1">Cell inner membrane</location>
        <topology evidence="2">Multi-pass membrane protein</topology>
    </subcellularLocation>
</comment>
<comment type="similarity">
    <text evidence="3">Belongs to the amino acid-polyamine-organocation (APC) superfamily.</text>
</comment>
<evidence type="ECO:0000250" key="1">
    <source>
        <dbReference type="UniProtKB" id="P27837"/>
    </source>
</evidence>
<evidence type="ECO:0000255" key="2"/>
<evidence type="ECO:0000305" key="3"/>